<protein>
    <recommendedName>
        <fullName evidence="1">3-isopropylmalate dehydratase small subunit</fullName>
        <ecNumber evidence="1">4.2.1.33</ecNumber>
    </recommendedName>
    <alternativeName>
        <fullName evidence="1">Alpha-IPM isomerase</fullName>
        <shortName evidence="1">IPMI</shortName>
    </alternativeName>
    <alternativeName>
        <fullName evidence="1">Isopropylmalate isomerase</fullName>
    </alternativeName>
</protein>
<name>LEUD_PSECP</name>
<sequence length="200" mass="22133">MEKFTKHTGIGVPLRQSNVDTDQIIPAVYLKRITRTGFEDALFSAWRKDSSFILNQEPFNAGSVLVAGPDFGTGSSREHAVWALKDYGFRAVLSSRFADIFRGNSGKQGLLAAQVAQDDIELIWKELENAPGTQVTVDLESKTVVCGNIVAPFEIDDYTRWRLLEGLDDIGLTLQHEADITAYEATRPSFKPKTLPAKVS</sequence>
<dbReference type="EC" id="4.2.1.33" evidence="1"/>
<dbReference type="EMBL" id="CP001341">
    <property type="protein sequence ID" value="ACL40220.1"/>
    <property type="molecule type" value="Genomic_DNA"/>
</dbReference>
<dbReference type="RefSeq" id="WP_015937435.1">
    <property type="nucleotide sequence ID" value="NC_011886.1"/>
</dbReference>
<dbReference type="SMR" id="B8HAC8"/>
<dbReference type="STRING" id="452863.Achl_2255"/>
<dbReference type="KEGG" id="ach:Achl_2255"/>
<dbReference type="eggNOG" id="COG0066">
    <property type="taxonomic scope" value="Bacteria"/>
</dbReference>
<dbReference type="HOGENOM" id="CLU_081378_0_1_11"/>
<dbReference type="OrthoDB" id="9777465at2"/>
<dbReference type="UniPathway" id="UPA00048">
    <property type="reaction ID" value="UER00071"/>
</dbReference>
<dbReference type="Proteomes" id="UP000002505">
    <property type="component" value="Chromosome"/>
</dbReference>
<dbReference type="GO" id="GO:0009316">
    <property type="term" value="C:3-isopropylmalate dehydratase complex"/>
    <property type="evidence" value="ECO:0007669"/>
    <property type="project" value="InterPro"/>
</dbReference>
<dbReference type="GO" id="GO:0003861">
    <property type="term" value="F:3-isopropylmalate dehydratase activity"/>
    <property type="evidence" value="ECO:0007669"/>
    <property type="project" value="UniProtKB-UniRule"/>
</dbReference>
<dbReference type="GO" id="GO:0009098">
    <property type="term" value="P:L-leucine biosynthetic process"/>
    <property type="evidence" value="ECO:0007669"/>
    <property type="project" value="UniProtKB-UniRule"/>
</dbReference>
<dbReference type="CDD" id="cd01577">
    <property type="entry name" value="IPMI_Swivel"/>
    <property type="match status" value="1"/>
</dbReference>
<dbReference type="FunFam" id="3.20.19.10:FF:000003">
    <property type="entry name" value="3-isopropylmalate dehydratase small subunit"/>
    <property type="match status" value="1"/>
</dbReference>
<dbReference type="Gene3D" id="3.20.19.10">
    <property type="entry name" value="Aconitase, domain 4"/>
    <property type="match status" value="1"/>
</dbReference>
<dbReference type="HAMAP" id="MF_01031">
    <property type="entry name" value="LeuD_type1"/>
    <property type="match status" value="1"/>
</dbReference>
<dbReference type="InterPro" id="IPR004431">
    <property type="entry name" value="3-IsopropMal_deHydase_ssu"/>
</dbReference>
<dbReference type="InterPro" id="IPR015928">
    <property type="entry name" value="Aconitase/3IPM_dehydase_swvl"/>
</dbReference>
<dbReference type="InterPro" id="IPR000573">
    <property type="entry name" value="AconitaseA/IPMdHydase_ssu_swvl"/>
</dbReference>
<dbReference type="InterPro" id="IPR033940">
    <property type="entry name" value="IPMI_Swivel"/>
</dbReference>
<dbReference type="InterPro" id="IPR050075">
    <property type="entry name" value="LeuD"/>
</dbReference>
<dbReference type="NCBIfam" id="TIGR00171">
    <property type="entry name" value="leuD"/>
    <property type="match status" value="1"/>
</dbReference>
<dbReference type="NCBIfam" id="NF002458">
    <property type="entry name" value="PRK01641.1"/>
    <property type="match status" value="1"/>
</dbReference>
<dbReference type="PANTHER" id="PTHR43345:SF5">
    <property type="entry name" value="3-ISOPROPYLMALATE DEHYDRATASE SMALL SUBUNIT"/>
    <property type="match status" value="1"/>
</dbReference>
<dbReference type="PANTHER" id="PTHR43345">
    <property type="entry name" value="3-ISOPROPYLMALATE DEHYDRATASE SMALL SUBUNIT 2-RELATED-RELATED"/>
    <property type="match status" value="1"/>
</dbReference>
<dbReference type="Pfam" id="PF00694">
    <property type="entry name" value="Aconitase_C"/>
    <property type="match status" value="1"/>
</dbReference>
<dbReference type="SUPFAM" id="SSF52016">
    <property type="entry name" value="LeuD/IlvD-like"/>
    <property type="match status" value="1"/>
</dbReference>
<keyword id="KW-0028">Amino-acid biosynthesis</keyword>
<keyword id="KW-0100">Branched-chain amino acid biosynthesis</keyword>
<keyword id="KW-0432">Leucine biosynthesis</keyword>
<keyword id="KW-0456">Lyase</keyword>
<comment type="function">
    <text evidence="1">Catalyzes the isomerization between 2-isopropylmalate and 3-isopropylmalate, via the formation of 2-isopropylmaleate.</text>
</comment>
<comment type="catalytic activity">
    <reaction evidence="1">
        <text>(2R,3S)-3-isopropylmalate = (2S)-2-isopropylmalate</text>
        <dbReference type="Rhea" id="RHEA:32287"/>
        <dbReference type="ChEBI" id="CHEBI:1178"/>
        <dbReference type="ChEBI" id="CHEBI:35121"/>
        <dbReference type="EC" id="4.2.1.33"/>
    </reaction>
</comment>
<comment type="pathway">
    <text evidence="1">Amino-acid biosynthesis; L-leucine biosynthesis; L-leucine from 3-methyl-2-oxobutanoate: step 2/4.</text>
</comment>
<comment type="subunit">
    <text evidence="1">Heterodimer of LeuC and LeuD.</text>
</comment>
<comment type="similarity">
    <text evidence="1">Belongs to the LeuD family. LeuD type 1 subfamily.</text>
</comment>
<proteinExistence type="inferred from homology"/>
<reference key="1">
    <citation type="submission" date="2009-01" db="EMBL/GenBank/DDBJ databases">
        <title>Complete sequence of chromosome of Arthrobacter chlorophenolicus A6.</title>
        <authorList>
            <consortium name="US DOE Joint Genome Institute"/>
            <person name="Lucas S."/>
            <person name="Copeland A."/>
            <person name="Lapidus A."/>
            <person name="Glavina del Rio T."/>
            <person name="Tice H."/>
            <person name="Bruce D."/>
            <person name="Goodwin L."/>
            <person name="Pitluck S."/>
            <person name="Goltsman E."/>
            <person name="Clum A."/>
            <person name="Larimer F."/>
            <person name="Land M."/>
            <person name="Hauser L."/>
            <person name="Kyrpides N."/>
            <person name="Mikhailova N."/>
            <person name="Jansson J."/>
            <person name="Richardson P."/>
        </authorList>
    </citation>
    <scope>NUCLEOTIDE SEQUENCE [LARGE SCALE GENOMIC DNA]</scope>
    <source>
        <strain>ATCC 700700 / DSM 12829 / CIP 107037 / JCM 12360 / KCTC 9906 / NCIMB 13794 / A6</strain>
    </source>
</reference>
<gene>
    <name evidence="1" type="primary">leuD</name>
    <name type="ordered locus">Achl_2255</name>
</gene>
<accession>B8HAC8</accession>
<evidence type="ECO:0000255" key="1">
    <source>
        <dbReference type="HAMAP-Rule" id="MF_01031"/>
    </source>
</evidence>
<organism>
    <name type="scientific">Pseudarthrobacter chlorophenolicus (strain ATCC 700700 / DSM 12829 / CIP 107037 / JCM 12360 / KCTC 9906 / NCIMB 13794 / A6)</name>
    <name type="common">Arthrobacter chlorophenolicus</name>
    <dbReference type="NCBI Taxonomy" id="452863"/>
    <lineage>
        <taxon>Bacteria</taxon>
        <taxon>Bacillati</taxon>
        <taxon>Actinomycetota</taxon>
        <taxon>Actinomycetes</taxon>
        <taxon>Micrococcales</taxon>
        <taxon>Micrococcaceae</taxon>
        <taxon>Pseudarthrobacter</taxon>
    </lineage>
</organism>
<feature type="chain" id="PRO_1000149398" description="3-isopropylmalate dehydratase small subunit">
    <location>
        <begin position="1"/>
        <end position="200"/>
    </location>
</feature>